<organism>
    <name type="scientific">Pectobacterium atrosepticum (strain SCRI 1043 / ATCC BAA-672)</name>
    <name type="common">Erwinia carotovora subsp. atroseptica</name>
    <dbReference type="NCBI Taxonomy" id="218491"/>
    <lineage>
        <taxon>Bacteria</taxon>
        <taxon>Pseudomonadati</taxon>
        <taxon>Pseudomonadota</taxon>
        <taxon>Gammaproteobacteria</taxon>
        <taxon>Enterobacterales</taxon>
        <taxon>Pectobacteriaceae</taxon>
        <taxon>Pectobacterium</taxon>
    </lineage>
</organism>
<sequence>MNILLISECNKRALVETRRILDQFAERKGERSWQTAITLEGLNTLRKLLRKTARRNTAVACHWIRSTNHTELLWVVGNLRRFNAQGSVPTNTTSRDVLRTKDENPWHSAEVFSLLAAIAGLFHDVGKANALFQAGLSGTGPRSQPYRHEWVSLRLFQAFVGEQDDKAWLTTLSMITSEAEVALLATLQQDKPTFSDSPFRTLPPLAQTIAWLIVSHHRLPVFNKSTELAPNSSEPQLSFAETWLTDHLSPQWNALNHCQIGWTPHEREQNWQFPNGTPLYSAVWREKARKFAGRALKLPSFMHFSQLDQRLTVHLARLALMLADHHYSAGAATVGWQDITYPVWANTDRKTGEYKQRLDEHCVGVGQNALLLGRSLPHLRDTLPAITRHKGFRQRSTHPRFRWQDRAFDLACSIRETSKQHGFFGINMASTGRGKTFANARIMYGLSDESTGCRFSVALGLRTLTLQTGDALRQRLKLDEDDLAVLIGSQAVQDLHEMRKENQQRQQNTPQTGSESADPLFSEHQYVRYDGSLDDGRLKAWLERSPTLHQLLSAPVLITTIDHLMPATEALRGGHQIAPMLRLLTADLVLDEPDDFGLEDLPALCRLVNWAGMLGSRVLLSSATLPPALIRALFDAYLDGRTAWQQAYGTPNTPLNVCCGWFDEFDCQHEQYGDVKDFMVRHDAFVHQRLKNLTKDELPLRFATIVPVSSPSKNADDVYLAVAQAIHPRMFDLHSQHHQQHENGKTVSLGLVRMANIDPLVAVARQLLAIPSPPDTCIHYCIYHSQHPLAMRSHIEQRLDAALMRNDADALWQVEEIRQAIEKSSQRHHVFVALATSVAEVGRDHDYDWAIVEPSSMRSLIQPAGRILRHRQDKQYVPKTPNIYLLSHNIRALRGKDIAYCKPGFESQDDSLDTHDLHQLLQEKEYRHLSAAPRIVQPMSFAKPLSLVALEHAVLGKTLLGLKNKKLDDLKRPPAAFWWRAHPHWNGELQRRTPFRQSAKDEAYTLWIADDDEEPVFMVQDDGPSGWKQSDIARPVTLNMAEGVSAWIEPDYHALYQQLAEEKQWELSWVSARFGEIRLREEEDWYWHPLLGVFGALS</sequence>
<evidence type="ECO:0000255" key="1"/>
<evidence type="ECO:0000255" key="2">
    <source>
        <dbReference type="PROSITE-ProRule" id="PRU00974"/>
    </source>
</evidence>
<evidence type="ECO:0000256" key="3">
    <source>
        <dbReference type="SAM" id="MobiDB-lite"/>
    </source>
</evidence>
<evidence type="ECO:0000269" key="4">
    <source>
    </source>
</evidence>
<evidence type="ECO:0000269" key="5">
    <source>
    </source>
</evidence>
<evidence type="ECO:0000269" key="6">
    <source>
    </source>
</evidence>
<evidence type="ECO:0000305" key="7"/>
<accession>Q6D0W9</accession>
<gene>
    <name type="primary">cas3</name>
    <name type="ordered locus">ECA3680</name>
</gene>
<comment type="function">
    <text evidence="6">CRISPR (clustered regularly interspaced short palindromic repeat) is an adaptive immune system that provides protection against mobile genetic elements (viruses, transposable elements and conjugative plasmids). CRISPR clusters contain sequences complementary to antecedent mobile elements and target invading nucleic acids. CRISPR clusters are transcribed and processed into CRISPR RNA (crRNA). Might be involved in the integration of spacer DNA into the CRISPR cassette.</text>
</comment>
<comment type="subunit">
    <text evidence="5">Interacts with Cas1 in the absence of crRNA. Probably interacts with the Csy ribonucleoprotein complex composed of cys1, cys2, csy3, cas6f and crRNA.</text>
</comment>
<comment type="induction">
    <text evidence="4">Expressed in late exponential phase (other phases not tested); part of a large cas-CRISPR3 polycistronic operon.</text>
</comment>
<comment type="biotechnology">
    <text evidence="6">If the spacer DNA has a perfect match in the chromosome then toxicity results. Suppression of the toxic effects occurs via mutations in the CRISPR/Cas machinery, or via target deletion, which might contribute to genome plasticity. This CRISPR/Cas system can be used to remove genomic islands, and possibly other genomic regions (PubMed:23637624).</text>
</comment>
<comment type="miscellaneous">
    <text>The N-terminus (1-about 100) might be the equivalent of Cas2 in this CRISPR subtype.</text>
</comment>
<comment type="similarity">
    <text evidence="7">In the N-terminal section; belongs to the CRISPR-associated nuclease Cas3-HD family.</text>
</comment>
<comment type="similarity">
    <text evidence="7">In the central section; belongs to the CRISPR-associated helicase Cas3 family.</text>
</comment>
<proteinExistence type="evidence at protein level"/>
<protein>
    <recommendedName>
        <fullName>CRISPR-associated nuclease/helicase Cas3 subtype I-F/YPEST</fullName>
        <ecNumber>3.1.-.-</ecNumber>
        <ecNumber>3.6.4.-</ecNumber>
    </recommendedName>
</protein>
<keyword id="KW-0051">Antiviral defense</keyword>
<keyword id="KW-0067">ATP-binding</keyword>
<keyword id="KW-0347">Helicase</keyword>
<keyword id="KW-0378">Hydrolase</keyword>
<keyword id="KW-0460">Magnesium</keyword>
<keyword id="KW-0479">Metal-binding</keyword>
<keyword id="KW-0540">Nuclease</keyword>
<keyword id="KW-0547">Nucleotide-binding</keyword>
<keyword id="KW-1185">Reference proteome</keyword>
<feature type="chain" id="PRO_0000430241" description="CRISPR-associated nuclease/helicase Cas3 subtype I-F/YPEST">
    <location>
        <begin position="1"/>
        <end position="1098"/>
    </location>
</feature>
<feature type="domain" description="HD Cas3-type" evidence="2">
    <location>
        <begin position="102"/>
        <end position="327"/>
    </location>
</feature>
<feature type="region of interest" description="Disordered" evidence="3">
    <location>
        <begin position="497"/>
        <end position="520"/>
    </location>
</feature>
<feature type="short sequence motif" description="DEAD box">
    <location>
        <begin position="591"/>
        <end position="594"/>
    </location>
</feature>
<feature type="compositionally biased region" description="Polar residues" evidence="3">
    <location>
        <begin position="504"/>
        <end position="515"/>
    </location>
</feature>
<feature type="binding site" evidence="1">
    <location>
        <position position="124"/>
    </location>
    <ligand>
        <name>Mg(2+)</name>
        <dbReference type="ChEBI" id="CHEBI:18420"/>
    </ligand>
</feature>
<feature type="binding site" evidence="1">
    <location>
        <position position="216"/>
    </location>
    <ligand>
        <name>Mg(2+)</name>
        <dbReference type="ChEBI" id="CHEBI:18420"/>
    </ligand>
</feature>
<dbReference type="EC" id="3.1.-.-"/>
<dbReference type="EC" id="3.6.4.-"/>
<dbReference type="EMBL" id="BX950851">
    <property type="protein sequence ID" value="CAG76578.1"/>
    <property type="molecule type" value="Genomic_DNA"/>
</dbReference>
<dbReference type="RefSeq" id="WP_011095180.1">
    <property type="nucleotide sequence ID" value="NC_004547.2"/>
</dbReference>
<dbReference type="SMR" id="Q6D0W9"/>
<dbReference type="STRING" id="218491.ECA3680"/>
<dbReference type="KEGG" id="eca:ECA3680"/>
<dbReference type="PATRIC" id="fig|218491.5.peg.3732"/>
<dbReference type="eggNOG" id="COG1203">
    <property type="taxonomic scope" value="Bacteria"/>
</dbReference>
<dbReference type="HOGENOM" id="CLU_009385_0_0_6"/>
<dbReference type="OrthoDB" id="220028at2"/>
<dbReference type="Proteomes" id="UP000007966">
    <property type="component" value="Chromosome"/>
</dbReference>
<dbReference type="GO" id="GO:0005524">
    <property type="term" value="F:ATP binding"/>
    <property type="evidence" value="ECO:0007669"/>
    <property type="project" value="UniProtKB-KW"/>
</dbReference>
<dbReference type="GO" id="GO:0004386">
    <property type="term" value="F:helicase activity"/>
    <property type="evidence" value="ECO:0007669"/>
    <property type="project" value="UniProtKB-KW"/>
</dbReference>
<dbReference type="GO" id="GO:0046872">
    <property type="term" value="F:metal ion binding"/>
    <property type="evidence" value="ECO:0007669"/>
    <property type="project" value="UniProtKB-KW"/>
</dbReference>
<dbReference type="GO" id="GO:0004518">
    <property type="term" value="F:nuclease activity"/>
    <property type="evidence" value="ECO:0007669"/>
    <property type="project" value="UniProtKB-KW"/>
</dbReference>
<dbReference type="GO" id="GO:0051607">
    <property type="term" value="P:defense response to virus"/>
    <property type="evidence" value="ECO:0007669"/>
    <property type="project" value="UniProtKB-KW"/>
</dbReference>
<dbReference type="Gene3D" id="1.10.3210.30">
    <property type="match status" value="1"/>
</dbReference>
<dbReference type="InterPro" id="IPR054712">
    <property type="entry name" value="Cas3-like_dom"/>
</dbReference>
<dbReference type="InterPro" id="IPR048823">
    <property type="entry name" value="Cas3_I-F_Cas2"/>
</dbReference>
<dbReference type="InterPro" id="IPR006483">
    <property type="entry name" value="CRISPR-assoc_Cas3_HD"/>
</dbReference>
<dbReference type="InterPro" id="IPR038257">
    <property type="entry name" value="CRISPR-assoc_Cas3_HD_sf"/>
</dbReference>
<dbReference type="InterPro" id="IPR013395">
    <property type="entry name" value="CRISPR-assoc_Cas3_yers"/>
</dbReference>
<dbReference type="InterPro" id="IPR027417">
    <property type="entry name" value="P-loop_NTPase"/>
</dbReference>
<dbReference type="NCBIfam" id="TIGR02562">
    <property type="entry name" value="cas3_yersinia"/>
    <property type="match status" value="1"/>
</dbReference>
<dbReference type="Pfam" id="PF22590">
    <property type="entry name" value="Cas3-like_C_2"/>
    <property type="match status" value="1"/>
</dbReference>
<dbReference type="Pfam" id="PF21384">
    <property type="entry name" value="Cas3_I-F_Cas2"/>
    <property type="match status" value="1"/>
</dbReference>
<dbReference type="SUPFAM" id="SSF52540">
    <property type="entry name" value="P-loop containing nucleoside triphosphate hydrolases"/>
    <property type="match status" value="1"/>
</dbReference>
<dbReference type="PROSITE" id="PS51643">
    <property type="entry name" value="HD_CAS3"/>
    <property type="match status" value="1"/>
</dbReference>
<reference key="1">
    <citation type="journal article" date="2004" name="Proc. Natl. Acad. Sci. U.S.A.">
        <title>Genome sequence of the enterobacterial phytopathogen Erwinia carotovora subsp. atroseptica and characterization of virulence factors.</title>
        <authorList>
            <person name="Bell K.S."/>
            <person name="Sebaihia M."/>
            <person name="Pritchard L."/>
            <person name="Holden M.T.G."/>
            <person name="Hyman L.J."/>
            <person name="Holeva M.C."/>
            <person name="Thomson N.R."/>
            <person name="Bentley S.D."/>
            <person name="Churcher L.J.C."/>
            <person name="Mungall K."/>
            <person name="Atkin R."/>
            <person name="Bason N."/>
            <person name="Brooks K."/>
            <person name="Chillingworth T."/>
            <person name="Clark K."/>
            <person name="Doggett J."/>
            <person name="Fraser A."/>
            <person name="Hance Z."/>
            <person name="Hauser H."/>
            <person name="Jagels K."/>
            <person name="Moule S."/>
            <person name="Norbertczak H."/>
            <person name="Ormond D."/>
            <person name="Price C."/>
            <person name="Quail M.A."/>
            <person name="Sanders M."/>
            <person name="Walker D."/>
            <person name="Whitehead S."/>
            <person name="Salmond G.P.C."/>
            <person name="Birch P.R.J."/>
            <person name="Parkhill J."/>
            <person name="Toth I.K."/>
        </authorList>
    </citation>
    <scope>NUCLEOTIDE SEQUENCE [LARGE SCALE GENOMIC DNA]</scope>
    <source>
        <strain>SCRI 1043 / ATCC BAA-672</strain>
    </source>
</reference>
<reference key="2">
    <citation type="journal article" date="2011" name="RNA Biol.">
        <title>Csy4 is responsible for CRISPR RNA processing in Pectobacterium atrosepticum.</title>
        <authorList>
            <person name="Przybilski R."/>
            <person name="Richter C."/>
            <person name="Gristwood T."/>
            <person name="Clulow J.S."/>
            <person name="Vercoe R.B."/>
            <person name="Fineran P.C."/>
        </authorList>
    </citation>
    <scope>INDUCTION</scope>
    <scope>OPERON STRUCTURE</scope>
    <source>
        <strain>SCRI 1043 / ATCC BAA-672</strain>
    </source>
</reference>
<reference key="3">
    <citation type="journal article" date="2012" name="PLoS ONE">
        <title>In vivo protein interactions and complex formation in the Pectobacterium atrosepticum subtype I-F CRISPR/Cas System.</title>
        <authorList>
            <person name="Richter C."/>
            <person name="Gristwood T."/>
            <person name="Clulow J.S."/>
            <person name="Fineran P.C."/>
        </authorList>
    </citation>
    <scope>IDENTIFICATION BY MASS SPECTROMETRY</scope>
    <scope>INTERACTION WITH CAS1</scope>
    <scope>SUBUNIT</scope>
    <source>
        <strain>SCRI 1043 / ATCC BAA-672</strain>
    </source>
</reference>
<reference key="4">
    <citation type="journal article" date="2013" name="PLoS Genet.">
        <title>Cytotoxic chromosomal targeting by CRISPR/Cas systems can reshape bacterial genomes and expel or remodel pathogenicity islands.</title>
        <authorList>
            <person name="Vercoe R.B."/>
            <person name="Chang J.T."/>
            <person name="Dy R.L."/>
            <person name="Taylor C."/>
            <person name="Gristwood T."/>
            <person name="Clulow J.S."/>
            <person name="Richter C."/>
            <person name="Przybilski R."/>
            <person name="Pitman A.R."/>
            <person name="Fineran P.C."/>
        </authorList>
    </citation>
    <scope>FUNCTION</scope>
    <scope>BIOTECHNOLOGY</scope>
    <source>
        <strain>SCRI 1043 / ATCC BAA-672</strain>
    </source>
</reference>
<name>CAS3_PECAS</name>